<organism>
    <name type="scientific">Wolbachia pipientis subsp. Culex pipiens (strain wPip)</name>
    <dbReference type="NCBI Taxonomy" id="570417"/>
    <lineage>
        <taxon>Bacteria</taxon>
        <taxon>Pseudomonadati</taxon>
        <taxon>Pseudomonadota</taxon>
        <taxon>Alphaproteobacteria</taxon>
        <taxon>Rickettsiales</taxon>
        <taxon>Anaplasmataceae</taxon>
        <taxon>Wolbachieae</taxon>
        <taxon>Wolbachia</taxon>
    </lineage>
</organism>
<comment type="function">
    <text evidence="1">One of the primary rRNA binding proteins, this protein initially binds near the 5'-end of the 23S rRNA. It is important during the early stages of 50S assembly. It makes multiple contacts with different domains of the 23S rRNA in the assembled 50S subunit and ribosome.</text>
</comment>
<comment type="function">
    <text evidence="1">Forms part of the polypeptide exit tunnel.</text>
</comment>
<comment type="subunit">
    <text evidence="1">Part of the 50S ribosomal subunit.</text>
</comment>
<comment type="similarity">
    <text evidence="1">Belongs to the universal ribosomal protein uL4 family.</text>
</comment>
<name>RL4_WOLPP</name>
<proteinExistence type="inferred from homology"/>
<sequence>MECELVDLSNNNVGSVELNPLIFSAKQKLSILHDIVRWQLAKRRVGAHKTKGISDVSGTTAKPYGQKRTGRARQGSLRSPQFRGGGIIFGPVVRSHAYSLNKKVRKFGLKIALSLKYLNNQVVVLDSLNVDVKKTSKMCEYIKNFKFSSFLIVGDYGDDLLRAAKNLHYVDLIKPIGLNVFDILNHECVMLTKDTLKHLEGRLL</sequence>
<accession>B3CN27</accession>
<feature type="chain" id="PRO_1000142205" description="Large ribosomal subunit protein uL4">
    <location>
        <begin position="1"/>
        <end position="204"/>
    </location>
</feature>
<feature type="region of interest" description="Disordered" evidence="2">
    <location>
        <begin position="56"/>
        <end position="79"/>
    </location>
</feature>
<gene>
    <name evidence="1" type="primary">rplD</name>
    <name type="ordered locus">WP1167</name>
</gene>
<protein>
    <recommendedName>
        <fullName evidence="1">Large ribosomal subunit protein uL4</fullName>
    </recommendedName>
    <alternativeName>
        <fullName evidence="3">50S ribosomal protein L4</fullName>
    </alternativeName>
</protein>
<dbReference type="EMBL" id="AM999887">
    <property type="protein sequence ID" value="CAQ55275.1"/>
    <property type="molecule type" value="Genomic_DNA"/>
</dbReference>
<dbReference type="RefSeq" id="WP_007302533.1">
    <property type="nucleotide sequence ID" value="NC_010981.1"/>
</dbReference>
<dbReference type="SMR" id="B3CN27"/>
<dbReference type="KEGG" id="wpi:WP1167"/>
<dbReference type="eggNOG" id="COG0088">
    <property type="taxonomic scope" value="Bacteria"/>
</dbReference>
<dbReference type="HOGENOM" id="CLU_041575_5_1_5"/>
<dbReference type="Proteomes" id="UP000008814">
    <property type="component" value="Chromosome"/>
</dbReference>
<dbReference type="GO" id="GO:1990904">
    <property type="term" value="C:ribonucleoprotein complex"/>
    <property type="evidence" value="ECO:0007669"/>
    <property type="project" value="UniProtKB-KW"/>
</dbReference>
<dbReference type="GO" id="GO:0005840">
    <property type="term" value="C:ribosome"/>
    <property type="evidence" value="ECO:0007669"/>
    <property type="project" value="UniProtKB-KW"/>
</dbReference>
<dbReference type="GO" id="GO:0019843">
    <property type="term" value="F:rRNA binding"/>
    <property type="evidence" value="ECO:0007669"/>
    <property type="project" value="UniProtKB-UniRule"/>
</dbReference>
<dbReference type="GO" id="GO:0003735">
    <property type="term" value="F:structural constituent of ribosome"/>
    <property type="evidence" value="ECO:0007669"/>
    <property type="project" value="InterPro"/>
</dbReference>
<dbReference type="GO" id="GO:0006412">
    <property type="term" value="P:translation"/>
    <property type="evidence" value="ECO:0007669"/>
    <property type="project" value="UniProtKB-UniRule"/>
</dbReference>
<dbReference type="Gene3D" id="3.40.1370.10">
    <property type="match status" value="1"/>
</dbReference>
<dbReference type="HAMAP" id="MF_01328_B">
    <property type="entry name" value="Ribosomal_uL4_B"/>
    <property type="match status" value="1"/>
</dbReference>
<dbReference type="InterPro" id="IPR002136">
    <property type="entry name" value="Ribosomal_uL4"/>
</dbReference>
<dbReference type="InterPro" id="IPR013005">
    <property type="entry name" value="Ribosomal_uL4-like"/>
</dbReference>
<dbReference type="InterPro" id="IPR023574">
    <property type="entry name" value="Ribosomal_uL4_dom_sf"/>
</dbReference>
<dbReference type="NCBIfam" id="TIGR03953">
    <property type="entry name" value="rplD_bact"/>
    <property type="match status" value="1"/>
</dbReference>
<dbReference type="PANTHER" id="PTHR10746">
    <property type="entry name" value="50S RIBOSOMAL PROTEIN L4"/>
    <property type="match status" value="1"/>
</dbReference>
<dbReference type="PANTHER" id="PTHR10746:SF6">
    <property type="entry name" value="LARGE RIBOSOMAL SUBUNIT PROTEIN UL4M"/>
    <property type="match status" value="1"/>
</dbReference>
<dbReference type="Pfam" id="PF00573">
    <property type="entry name" value="Ribosomal_L4"/>
    <property type="match status" value="1"/>
</dbReference>
<dbReference type="SUPFAM" id="SSF52166">
    <property type="entry name" value="Ribosomal protein L4"/>
    <property type="match status" value="1"/>
</dbReference>
<keyword id="KW-0687">Ribonucleoprotein</keyword>
<keyword id="KW-0689">Ribosomal protein</keyword>
<keyword id="KW-0694">RNA-binding</keyword>
<keyword id="KW-0699">rRNA-binding</keyword>
<evidence type="ECO:0000255" key="1">
    <source>
        <dbReference type="HAMAP-Rule" id="MF_01328"/>
    </source>
</evidence>
<evidence type="ECO:0000256" key="2">
    <source>
        <dbReference type="SAM" id="MobiDB-lite"/>
    </source>
</evidence>
<evidence type="ECO:0000305" key="3"/>
<reference key="1">
    <citation type="journal article" date="2008" name="Mol. Biol. Evol.">
        <title>Genome evolution of Wolbachia strain wPip from the Culex pipiens group.</title>
        <authorList>
            <person name="Klasson L."/>
            <person name="Walker T."/>
            <person name="Sebaihia M."/>
            <person name="Sanders M.J."/>
            <person name="Quail M.A."/>
            <person name="Lord A."/>
            <person name="Sanders S."/>
            <person name="Earl J."/>
            <person name="O'Neill S.L."/>
            <person name="Thomson N."/>
            <person name="Sinkins S.P."/>
            <person name="Parkhill J."/>
        </authorList>
    </citation>
    <scope>NUCLEOTIDE SEQUENCE [LARGE SCALE GENOMIC DNA]</scope>
    <source>
        <strain>wPip</strain>
    </source>
</reference>